<protein>
    <recommendedName>
        <fullName>Gaegurin-1</fullName>
    </recommendedName>
</protein>
<sequence length="33" mass="3462">SLFSLIKAGAKFLGKNLLKQGACYAACKASKQC</sequence>
<keyword id="KW-0878">Amphibian defense peptide</keyword>
<keyword id="KW-0044">Antibiotic</keyword>
<keyword id="KW-0929">Antimicrobial</keyword>
<keyword id="KW-0903">Direct protein sequencing</keyword>
<keyword id="KW-1015">Disulfide bond</keyword>
<keyword id="KW-0964">Secreted</keyword>
<organism>
    <name type="scientific">Glandirana rugosa</name>
    <name type="common">Japanese wrinkled frog</name>
    <name type="synonym">Rana rugosa</name>
    <dbReference type="NCBI Taxonomy" id="8410"/>
    <lineage>
        <taxon>Eukaryota</taxon>
        <taxon>Metazoa</taxon>
        <taxon>Chordata</taxon>
        <taxon>Craniata</taxon>
        <taxon>Vertebrata</taxon>
        <taxon>Euteleostomi</taxon>
        <taxon>Amphibia</taxon>
        <taxon>Batrachia</taxon>
        <taxon>Anura</taxon>
        <taxon>Neobatrachia</taxon>
        <taxon>Ranoidea</taxon>
        <taxon>Ranidae</taxon>
        <taxon>Glandirana</taxon>
    </lineage>
</organism>
<feature type="peptide" id="PRO_0000044652" description="Gaegurin-1">
    <location>
        <begin position="1"/>
        <end position="33"/>
    </location>
</feature>
<feature type="disulfide bond" evidence="1">
    <location>
        <begin position="27"/>
        <end position="33"/>
    </location>
</feature>
<comment type="function">
    <text>Has a non-hemolytic activity. Has a broad spectrum of activity against both Gram-positive and Gram-negative bacteria, fungi and protozoa.</text>
</comment>
<comment type="subunit">
    <text>Monomer.</text>
</comment>
<comment type="subcellular location">
    <subcellularLocation>
        <location>Secreted</location>
    </subcellularLocation>
</comment>
<comment type="tissue specificity">
    <text>Expressed by the skin glands.</text>
</comment>
<comment type="similarity">
    <text evidence="2">Belongs to the frog skin active peptide (FSAP) family. Brevinin subfamily.</text>
</comment>
<accession>P80395</accession>
<reference key="1">
    <citation type="journal article" date="1994" name="Biochem. Biophys. Res. Commun.">
        <title>Antimicrobial peptides from the skin of a Korean frog, Rana rugosa.</title>
        <authorList>
            <person name="Park J.M."/>
            <person name="Jung J.-E."/>
            <person name="Lee B.J."/>
        </authorList>
    </citation>
    <scope>PROTEIN SEQUENCE</scope>
    <source>
        <tissue>Skin secretion</tissue>
    </source>
</reference>
<proteinExistence type="evidence at protein level"/>
<dbReference type="PIR" id="PC2300">
    <property type="entry name" value="PC2300"/>
</dbReference>
<dbReference type="SMR" id="P80395"/>
<dbReference type="GO" id="GO:0005576">
    <property type="term" value="C:extracellular region"/>
    <property type="evidence" value="ECO:0007669"/>
    <property type="project" value="UniProtKB-SubCell"/>
</dbReference>
<dbReference type="GO" id="GO:0042742">
    <property type="term" value="P:defense response to bacterium"/>
    <property type="evidence" value="ECO:0007669"/>
    <property type="project" value="UniProtKB-KW"/>
</dbReference>
<dbReference type="InterPro" id="IPR012521">
    <property type="entry name" value="Antimicrobial_frog_2"/>
</dbReference>
<dbReference type="Pfam" id="PF08023">
    <property type="entry name" value="Antimicrobial_2"/>
    <property type="match status" value="1"/>
</dbReference>
<name>GGN1_GLARU</name>
<evidence type="ECO:0000250" key="1"/>
<evidence type="ECO:0000305" key="2"/>
<gene>
    <name type="primary">GGN1</name>
</gene>